<comment type="function">
    <text evidence="3">Catalyzes the oxidative phosphorylation of glyceraldehyde 3-phosphate (G3P) to 1,3-bisphosphoglycerate (BPG) using the cofactor NAD. The first reaction step involves the formation of a hemiacetal intermediate between G3P and a cysteine residue, and this hemiacetal intermediate is then oxidized to a thioester, with concomitant reduction of NAD to NADH. The reduced NADH is then exchanged with the second NAD, and the thioester is attacked by a nucleophilic inorganic phosphate to produce BPG.</text>
</comment>
<comment type="catalytic activity">
    <reaction evidence="3">
        <text>D-glyceraldehyde 3-phosphate + phosphate + NAD(+) = (2R)-3-phospho-glyceroyl phosphate + NADH + H(+)</text>
        <dbReference type="Rhea" id="RHEA:10300"/>
        <dbReference type="ChEBI" id="CHEBI:15378"/>
        <dbReference type="ChEBI" id="CHEBI:43474"/>
        <dbReference type="ChEBI" id="CHEBI:57540"/>
        <dbReference type="ChEBI" id="CHEBI:57604"/>
        <dbReference type="ChEBI" id="CHEBI:57945"/>
        <dbReference type="ChEBI" id="CHEBI:59776"/>
        <dbReference type="EC" id="1.2.1.12"/>
    </reaction>
</comment>
<comment type="pathway">
    <text evidence="4">Carbohydrate degradation; glycolysis; pyruvate from D-glyceraldehyde 3-phosphate: step 1/5.</text>
</comment>
<comment type="subunit">
    <text evidence="2">Homotetramer.</text>
</comment>
<comment type="subcellular location">
    <subcellularLocation>
        <location evidence="4">Cytoplasm</location>
    </subcellularLocation>
</comment>
<comment type="similarity">
    <text evidence="4">Belongs to the glyceraldehyde-3-phosphate dehydrogenase family.</text>
</comment>
<evidence type="ECO:0000250" key="1">
    <source>
        <dbReference type="UniProtKB" id="P00362"/>
    </source>
</evidence>
<evidence type="ECO:0000250" key="2">
    <source>
        <dbReference type="UniProtKB" id="P54226"/>
    </source>
</evidence>
<evidence type="ECO:0000250" key="3">
    <source>
        <dbReference type="UniProtKB" id="P9WN83"/>
    </source>
</evidence>
<evidence type="ECO:0000305" key="4"/>
<feature type="chain" id="PRO_0000427172" description="Glyceraldehyde-3-phosphate dehydrogenase">
    <location>
        <begin position="1"/>
        <end position="339"/>
    </location>
</feature>
<feature type="active site" description="Nucleophile" evidence="1">
    <location>
        <position position="158"/>
    </location>
</feature>
<feature type="binding site" evidence="1">
    <location>
        <begin position="12"/>
        <end position="13"/>
    </location>
    <ligand>
        <name>NAD(+)</name>
        <dbReference type="ChEBI" id="CHEBI:57540"/>
    </ligand>
</feature>
<feature type="binding site" evidence="1">
    <location>
        <position position="39"/>
    </location>
    <ligand>
        <name>NAD(+)</name>
        <dbReference type="ChEBI" id="CHEBI:57540"/>
    </ligand>
</feature>
<feature type="binding site" evidence="1">
    <location>
        <position position="84"/>
    </location>
    <ligand>
        <name>NAD(+)</name>
        <dbReference type="ChEBI" id="CHEBI:57540"/>
    </ligand>
</feature>
<feature type="binding site" evidence="1">
    <location>
        <position position="127"/>
    </location>
    <ligand>
        <name>NAD(+)</name>
        <dbReference type="ChEBI" id="CHEBI:57540"/>
    </ligand>
</feature>
<feature type="binding site" evidence="1">
    <location>
        <begin position="157"/>
        <end position="159"/>
    </location>
    <ligand>
        <name>D-glyceraldehyde 3-phosphate</name>
        <dbReference type="ChEBI" id="CHEBI:59776"/>
    </ligand>
</feature>
<feature type="binding site" evidence="1">
    <location>
        <position position="188"/>
    </location>
    <ligand>
        <name>D-glyceraldehyde 3-phosphate</name>
        <dbReference type="ChEBI" id="CHEBI:59776"/>
    </ligand>
</feature>
<feature type="binding site" evidence="1">
    <location>
        <position position="203"/>
    </location>
    <ligand>
        <name>D-glyceraldehyde 3-phosphate</name>
        <dbReference type="ChEBI" id="CHEBI:59776"/>
    </ligand>
</feature>
<feature type="binding site" evidence="1">
    <location>
        <begin position="216"/>
        <end position="217"/>
    </location>
    <ligand>
        <name>D-glyceraldehyde 3-phosphate</name>
        <dbReference type="ChEBI" id="CHEBI:59776"/>
    </ligand>
</feature>
<feature type="binding site" evidence="1">
    <location>
        <position position="239"/>
    </location>
    <ligand>
        <name>D-glyceraldehyde 3-phosphate</name>
        <dbReference type="ChEBI" id="CHEBI:59776"/>
    </ligand>
</feature>
<feature type="binding site" evidence="1">
    <location>
        <position position="320"/>
    </location>
    <ligand>
        <name>NAD(+)</name>
        <dbReference type="ChEBI" id="CHEBI:57540"/>
    </ligand>
</feature>
<feature type="site" description="Activates thiol group during catalysis" evidence="1">
    <location>
        <position position="185"/>
    </location>
</feature>
<proteinExistence type="inferred from homology"/>
<sequence>MTVRVGINGFGRIGRNFYRALLAQQEQGTADVEVVAANDITDNSTLAHLLKFDSILGRLPCDVGLEGDDTIVVGRAKIKALAVREGPAALPWGDLGVDVVVESTGLFTNAAKAKGHLDAGAKKVIISAPATDEDITIVLGVNDDKYDGSQNIISNASCTTNCLAPLAKVLDDEFGIVKGLMTTIHAYTQDQNLQDGPHKDLRRARAAALNIVPTSTGAAKAIGLVMPQLKGKLDGYALRVPIPTGSVTDLTVDLSTRASVDEINAAFKAAAEGRLKGILKYYDAPIVSSDIVTDPHSSIFDSGLTKVIDDQAKVVSWYDNEWGYSNRLVDLVTLVGKSL</sequence>
<dbReference type="EC" id="1.2.1.12" evidence="3"/>
<dbReference type="EMBL" id="AE000516">
    <property type="protein sequence ID" value="AAK45745.1"/>
    <property type="molecule type" value="Genomic_DNA"/>
</dbReference>
<dbReference type="PIR" id="G70915">
    <property type="entry name" value="G70915"/>
</dbReference>
<dbReference type="RefSeq" id="WP_003407390.1">
    <property type="nucleotide sequence ID" value="NZ_KK341227.1"/>
</dbReference>
<dbReference type="SMR" id="P9WN82"/>
<dbReference type="GeneID" id="45425414"/>
<dbReference type="KEGG" id="mtc:MT1480"/>
<dbReference type="PATRIC" id="fig|83331.31.peg.1589"/>
<dbReference type="HOGENOM" id="CLU_030140_0_2_11"/>
<dbReference type="UniPathway" id="UPA00109">
    <property type="reaction ID" value="UER00184"/>
</dbReference>
<dbReference type="Proteomes" id="UP000001020">
    <property type="component" value="Chromosome"/>
</dbReference>
<dbReference type="GO" id="GO:0005737">
    <property type="term" value="C:cytoplasm"/>
    <property type="evidence" value="ECO:0007669"/>
    <property type="project" value="UniProtKB-SubCell"/>
</dbReference>
<dbReference type="GO" id="GO:0004365">
    <property type="term" value="F:glyceraldehyde-3-phosphate dehydrogenase (NAD+) (phosphorylating) activity"/>
    <property type="evidence" value="ECO:0000250"/>
    <property type="project" value="UniProtKB"/>
</dbReference>
<dbReference type="GO" id="GO:0051287">
    <property type="term" value="F:NAD binding"/>
    <property type="evidence" value="ECO:0000250"/>
    <property type="project" value="UniProtKB"/>
</dbReference>
<dbReference type="GO" id="GO:0050661">
    <property type="term" value="F:NADP binding"/>
    <property type="evidence" value="ECO:0007669"/>
    <property type="project" value="InterPro"/>
</dbReference>
<dbReference type="GO" id="GO:0006006">
    <property type="term" value="P:glucose metabolic process"/>
    <property type="evidence" value="ECO:0007669"/>
    <property type="project" value="InterPro"/>
</dbReference>
<dbReference type="GO" id="GO:0006096">
    <property type="term" value="P:glycolytic process"/>
    <property type="evidence" value="ECO:0007669"/>
    <property type="project" value="UniProtKB-UniPathway"/>
</dbReference>
<dbReference type="CDD" id="cd18126">
    <property type="entry name" value="GAPDH_I_C"/>
    <property type="match status" value="1"/>
</dbReference>
<dbReference type="CDD" id="cd05214">
    <property type="entry name" value="GAPDH_I_N"/>
    <property type="match status" value="1"/>
</dbReference>
<dbReference type="FunFam" id="3.30.360.10:FF:000002">
    <property type="entry name" value="Glyceraldehyde-3-phosphate dehydrogenase"/>
    <property type="match status" value="1"/>
</dbReference>
<dbReference type="FunFam" id="3.40.50.720:FF:000001">
    <property type="entry name" value="Glyceraldehyde-3-phosphate dehydrogenase"/>
    <property type="match status" value="1"/>
</dbReference>
<dbReference type="Gene3D" id="3.30.360.10">
    <property type="entry name" value="Dihydrodipicolinate Reductase, domain 2"/>
    <property type="match status" value="1"/>
</dbReference>
<dbReference type="Gene3D" id="3.40.50.720">
    <property type="entry name" value="NAD(P)-binding Rossmann-like Domain"/>
    <property type="match status" value="1"/>
</dbReference>
<dbReference type="InterPro" id="IPR020831">
    <property type="entry name" value="GlycerAld/Erythrose_P_DH"/>
</dbReference>
<dbReference type="InterPro" id="IPR020830">
    <property type="entry name" value="GlycerAld_3-P_DH_AS"/>
</dbReference>
<dbReference type="InterPro" id="IPR020829">
    <property type="entry name" value="GlycerAld_3-P_DH_cat"/>
</dbReference>
<dbReference type="InterPro" id="IPR020828">
    <property type="entry name" value="GlycerAld_3-P_DH_NAD(P)-bd"/>
</dbReference>
<dbReference type="InterPro" id="IPR006424">
    <property type="entry name" value="Glyceraldehyde-3-P_DH_1"/>
</dbReference>
<dbReference type="InterPro" id="IPR036291">
    <property type="entry name" value="NAD(P)-bd_dom_sf"/>
</dbReference>
<dbReference type="NCBIfam" id="TIGR01534">
    <property type="entry name" value="GAPDH-I"/>
    <property type="match status" value="1"/>
</dbReference>
<dbReference type="PANTHER" id="PTHR43148">
    <property type="entry name" value="GLYCERALDEHYDE-3-PHOSPHATE DEHYDROGENASE 2"/>
    <property type="match status" value="1"/>
</dbReference>
<dbReference type="Pfam" id="PF02800">
    <property type="entry name" value="Gp_dh_C"/>
    <property type="match status" value="1"/>
</dbReference>
<dbReference type="Pfam" id="PF00044">
    <property type="entry name" value="Gp_dh_N"/>
    <property type="match status" value="1"/>
</dbReference>
<dbReference type="PIRSF" id="PIRSF000149">
    <property type="entry name" value="GAP_DH"/>
    <property type="match status" value="1"/>
</dbReference>
<dbReference type="PRINTS" id="PR00078">
    <property type="entry name" value="G3PDHDRGNASE"/>
</dbReference>
<dbReference type="SMART" id="SM00846">
    <property type="entry name" value="Gp_dh_N"/>
    <property type="match status" value="1"/>
</dbReference>
<dbReference type="SUPFAM" id="SSF55347">
    <property type="entry name" value="Glyceraldehyde-3-phosphate dehydrogenase-like, C-terminal domain"/>
    <property type="match status" value="1"/>
</dbReference>
<dbReference type="SUPFAM" id="SSF51735">
    <property type="entry name" value="NAD(P)-binding Rossmann-fold domains"/>
    <property type="match status" value="1"/>
</dbReference>
<dbReference type="PROSITE" id="PS00071">
    <property type="entry name" value="GAPDH"/>
    <property type="match status" value="1"/>
</dbReference>
<organism>
    <name type="scientific">Mycobacterium tuberculosis (strain CDC 1551 / Oshkosh)</name>
    <dbReference type="NCBI Taxonomy" id="83331"/>
    <lineage>
        <taxon>Bacteria</taxon>
        <taxon>Bacillati</taxon>
        <taxon>Actinomycetota</taxon>
        <taxon>Actinomycetes</taxon>
        <taxon>Mycobacteriales</taxon>
        <taxon>Mycobacteriaceae</taxon>
        <taxon>Mycobacterium</taxon>
        <taxon>Mycobacterium tuberculosis complex</taxon>
    </lineage>
</organism>
<keyword id="KW-0963">Cytoplasm</keyword>
<keyword id="KW-0324">Glycolysis</keyword>
<keyword id="KW-0520">NAD</keyword>
<keyword id="KW-0547">Nucleotide-binding</keyword>
<keyword id="KW-0560">Oxidoreductase</keyword>
<keyword id="KW-1185">Reference proteome</keyword>
<gene>
    <name type="primary">gap</name>
    <name type="ordered locus">MT1480</name>
</gene>
<protein>
    <recommendedName>
        <fullName evidence="3">Glyceraldehyde-3-phosphate dehydrogenase</fullName>
        <shortName evidence="3">GAPDH</shortName>
        <ecNumber evidence="3">1.2.1.12</ecNumber>
    </recommendedName>
    <alternativeName>
        <fullName evidence="3">NAD-dependent glyceraldehyde-3-phosphate dehydrogenase</fullName>
    </alternativeName>
</protein>
<name>G3P_MYCTO</name>
<accession>P9WN82</accession>
<accession>L0T894</accession>
<accession>O06822</accession>
<accession>P64178</accession>
<reference key="1">
    <citation type="journal article" date="2002" name="J. Bacteriol.">
        <title>Whole-genome comparison of Mycobacterium tuberculosis clinical and laboratory strains.</title>
        <authorList>
            <person name="Fleischmann R.D."/>
            <person name="Alland D."/>
            <person name="Eisen J.A."/>
            <person name="Carpenter L."/>
            <person name="White O."/>
            <person name="Peterson J.D."/>
            <person name="DeBoy R.T."/>
            <person name="Dodson R.J."/>
            <person name="Gwinn M.L."/>
            <person name="Haft D.H."/>
            <person name="Hickey E.K."/>
            <person name="Kolonay J.F."/>
            <person name="Nelson W.C."/>
            <person name="Umayam L.A."/>
            <person name="Ermolaeva M.D."/>
            <person name="Salzberg S.L."/>
            <person name="Delcher A."/>
            <person name="Utterback T.R."/>
            <person name="Weidman J.F."/>
            <person name="Khouri H.M."/>
            <person name="Gill J."/>
            <person name="Mikula A."/>
            <person name="Bishai W."/>
            <person name="Jacobs W.R. Jr."/>
            <person name="Venter J.C."/>
            <person name="Fraser C.M."/>
        </authorList>
    </citation>
    <scope>NUCLEOTIDE SEQUENCE [LARGE SCALE GENOMIC DNA]</scope>
    <source>
        <strain>CDC 1551 / Oshkosh</strain>
    </source>
</reference>